<protein>
    <recommendedName>
        <fullName>Polyribonucleotide nucleotidyltransferase 2, mitochondrial</fullName>
        <ecNumber>2.7.7.8</ecNumber>
    </recommendedName>
    <alternativeName>
        <fullName>Polynucleotide phosphorylase 2</fullName>
        <shortName>PNPase 2</shortName>
    </alternativeName>
</protein>
<feature type="transit peptide" description="Mitochondrion" evidence="2">
    <location>
        <begin position="1"/>
        <end position="39"/>
    </location>
</feature>
<feature type="chain" id="PRO_0000420277" description="Polyribonucleotide nucleotidyltransferase 2, mitochondrial">
    <location>
        <begin position="40"/>
        <end position="982"/>
    </location>
</feature>
<feature type="domain" description="KH">
    <location>
        <begin position="624"/>
        <end position="678"/>
    </location>
</feature>
<feature type="domain" description="S1 motif 1">
    <location>
        <begin position="689"/>
        <end position="757"/>
    </location>
</feature>
<feature type="domain" description="S1 motif 2">
    <location>
        <begin position="920"/>
        <end position="982"/>
    </location>
</feature>
<feature type="region of interest" description="Disordered" evidence="3">
    <location>
        <begin position="792"/>
        <end position="814"/>
    </location>
</feature>
<feature type="region of interest" description="Disordered" evidence="3">
    <location>
        <begin position="832"/>
        <end position="892"/>
    </location>
</feature>
<feature type="compositionally biased region" description="Low complexity" evidence="3">
    <location>
        <begin position="846"/>
        <end position="855"/>
    </location>
</feature>
<feature type="compositionally biased region" description="Low complexity" evidence="3">
    <location>
        <begin position="868"/>
        <end position="877"/>
    </location>
</feature>
<organism>
    <name type="scientific">Oryza sativa subsp. japonica</name>
    <name type="common">Rice</name>
    <dbReference type="NCBI Taxonomy" id="39947"/>
    <lineage>
        <taxon>Eukaryota</taxon>
        <taxon>Viridiplantae</taxon>
        <taxon>Streptophyta</taxon>
        <taxon>Embryophyta</taxon>
        <taxon>Tracheophyta</taxon>
        <taxon>Spermatophyta</taxon>
        <taxon>Magnoliopsida</taxon>
        <taxon>Liliopsida</taxon>
        <taxon>Poales</taxon>
        <taxon>Poaceae</taxon>
        <taxon>BOP clade</taxon>
        <taxon>Oryzoideae</taxon>
        <taxon>Oryzeae</taxon>
        <taxon>Oryzinae</taxon>
        <taxon>Oryza</taxon>
        <taxon>Oryza sativa</taxon>
    </lineage>
</organism>
<proteinExistence type="evidence at transcript level"/>
<comment type="function">
    <text evidence="1">Involved in the 3'-end maturation of mitochondrial mRNAs, rRNAs and tRNAs. Functions as a poly(A) mRNA 3'-5' degrading phosphorylase (By similarity).</text>
</comment>
<comment type="catalytic activity">
    <reaction>
        <text>RNA(n+1) + phosphate = RNA(n) + a ribonucleoside 5'-diphosphate</text>
        <dbReference type="Rhea" id="RHEA:22096"/>
        <dbReference type="Rhea" id="RHEA-COMP:14527"/>
        <dbReference type="Rhea" id="RHEA-COMP:17342"/>
        <dbReference type="ChEBI" id="CHEBI:43474"/>
        <dbReference type="ChEBI" id="CHEBI:57930"/>
        <dbReference type="ChEBI" id="CHEBI:140395"/>
        <dbReference type="EC" id="2.7.7.8"/>
    </reaction>
</comment>
<comment type="subcellular location">
    <subcellularLocation>
        <location evidence="1">Mitochondrion</location>
    </subcellularLocation>
</comment>
<comment type="similarity">
    <text evidence="4">Belongs to the polyribonucleotide nucleotidyltransferase family.</text>
</comment>
<comment type="sequence caution" evidence="4">
    <conflict type="erroneous gene model prediction">
        <sequence resource="EMBL-CDS" id="BAF09358"/>
    </conflict>
</comment>
<name>PNP2_ORYSJ</name>
<sequence length="982" mass="107028">MSMAVASLRLLARGGRRRARFPAPLSVPGGRAAFLSGAAEEVAQADAPPPPPPGRKVLESFREEFEIGGRVISFETGKMARFANGSVVISMDDTHVLSTVAAAKSSEPVRDFLPLTVDYQEKQYAQGVIPTTYMRREGAPKERELLCGRIIDRPIRPLFPPGFYHEVQVMNATIIMVNVISSDGKQDPDVMAANASSAALMLSDIPWNGPIGVIRVGRIDGNFVLNPTVDELGLSDLNLVYACSRDKTLMIDVQAREITERDLQAGMKLAHAEAVKCINPQLRLAKRAGKKKKEYKISLISDKSYEKIRTLSEAPIEEVFTDSTYGKFERGEALENITQSVKAKLEEECDEDSLKFLHKAVDTVRKQVIRKRIIEKGLRVDGRQLDEVRPLYCESSTYPILHGSALFSRGDTQVLCTVTLGAPGDAQRLDSIVGPPTKRFMLHYSFPPFSINEVAKRGGLNRREVGHGTLAEKALLAVLPPEGEFPYTVRVNSEVMASDGSTSMASVCGGSMALMDAGIPVREHVAGVSVGLVSEVDQTTGDISSYRILTDILGLEDHLGDMDFKIAGTRRGITAIQLDIKPAGIPLDIICESLEPARKARNQILDRMDQEISSARAFNDGSSPRLATLSFSSDSLRKLLFHRKKIEQETGARVSVSDGTVTIVAKTQPIMDKAIEKVEFLVGREIEVGRTYKGVVSSIKEYGAFVEFNGGQQGLLHISELSHDKVSKVSDVVSVGQVLSLTCIGQDLRGNIKLSLKATLPHAHEKKDLASNHTDPLPSQEVVGWTAVENMPSKDANAEPSISKDEDNMIEETPGCSTPAVIIRSAAECDAQDVTNDPKKKRPKVAKSSPKLSKPASERQEVKRTSAKKTSGASTTAKKNKKEKADSSNDVLDAIPEQNKSNIMNYSSPSNFRSGSMKLGDVVTAKVYQIRAYGLVLELSDGVRGMHKFAENGHKDFEVGEELLVKCSSFNAKGIPVFSLLD</sequence>
<keyword id="KW-0269">Exonuclease</keyword>
<keyword id="KW-0378">Hydrolase</keyword>
<keyword id="KW-0496">Mitochondrion</keyword>
<keyword id="KW-0507">mRNA processing</keyword>
<keyword id="KW-0540">Nuclease</keyword>
<keyword id="KW-0548">Nucleotidyltransferase</keyword>
<keyword id="KW-1185">Reference proteome</keyword>
<keyword id="KW-0677">Repeat</keyword>
<keyword id="KW-0694">RNA-binding</keyword>
<keyword id="KW-0698">rRNA processing</keyword>
<keyword id="KW-0808">Transferase</keyword>
<keyword id="KW-0809">Transit peptide</keyword>
<keyword id="KW-0819">tRNA processing</keyword>
<accession>Q6KAI0</accession>
<accession>Q0DZI0</accession>
<gene>
    <name type="primary">PNP2</name>
    <name type="ordered locus">Os02g0617700</name>
    <name type="ordered locus">LOC_Os02g40460</name>
    <name type="ORF">OJ1014_H03.14</name>
</gene>
<reference key="1">
    <citation type="journal article" date="2005" name="Nature">
        <title>The map-based sequence of the rice genome.</title>
        <authorList>
            <consortium name="International rice genome sequencing project (IRGSP)"/>
        </authorList>
    </citation>
    <scope>NUCLEOTIDE SEQUENCE [LARGE SCALE GENOMIC DNA]</scope>
    <source>
        <strain>cv. Nipponbare</strain>
    </source>
</reference>
<reference key="2">
    <citation type="journal article" date="2008" name="Nucleic Acids Res.">
        <title>The rice annotation project database (RAP-DB): 2008 update.</title>
        <authorList>
            <consortium name="The rice annotation project (RAP)"/>
        </authorList>
    </citation>
    <scope>GENOME REANNOTATION</scope>
    <source>
        <strain>cv. Nipponbare</strain>
    </source>
</reference>
<reference key="3">
    <citation type="journal article" date="2013" name="Rice">
        <title>Improvement of the Oryza sativa Nipponbare reference genome using next generation sequence and optical map data.</title>
        <authorList>
            <person name="Kawahara Y."/>
            <person name="de la Bastide M."/>
            <person name="Hamilton J.P."/>
            <person name="Kanamori H."/>
            <person name="McCombie W.R."/>
            <person name="Ouyang S."/>
            <person name="Schwartz D.C."/>
            <person name="Tanaka T."/>
            <person name="Wu J."/>
            <person name="Zhou S."/>
            <person name="Childs K.L."/>
            <person name="Davidson R.M."/>
            <person name="Lin H."/>
            <person name="Quesada-Ocampo L."/>
            <person name="Vaillancourt B."/>
            <person name="Sakai H."/>
            <person name="Lee S.S."/>
            <person name="Kim J."/>
            <person name="Numa H."/>
            <person name="Itoh T."/>
            <person name="Buell C.R."/>
            <person name="Matsumoto T."/>
        </authorList>
    </citation>
    <scope>GENOME REANNOTATION</scope>
    <source>
        <strain>cv. Nipponbare</strain>
    </source>
</reference>
<reference key="4">
    <citation type="journal article" date="2003" name="Science">
        <title>Collection, mapping, and annotation of over 28,000 cDNA clones from japonica rice.</title>
        <authorList>
            <consortium name="The rice full-length cDNA consortium"/>
        </authorList>
    </citation>
    <scope>NUCLEOTIDE SEQUENCE [LARGE SCALE MRNA] OF 661-982</scope>
    <source>
        <strain>cv. Nipponbare</strain>
    </source>
</reference>
<dbReference type="EC" id="2.7.7.8"/>
<dbReference type="EMBL" id="AP003980">
    <property type="protein sequence ID" value="BAD21450.1"/>
    <property type="molecule type" value="Genomic_DNA"/>
</dbReference>
<dbReference type="EMBL" id="AP008208">
    <property type="protein sequence ID" value="BAF09358.1"/>
    <property type="status" value="ALT_SEQ"/>
    <property type="molecule type" value="Genomic_DNA"/>
</dbReference>
<dbReference type="EMBL" id="AP014958">
    <property type="status" value="NOT_ANNOTATED_CDS"/>
    <property type="molecule type" value="Genomic_DNA"/>
</dbReference>
<dbReference type="EMBL" id="AK058997">
    <property type="status" value="NOT_ANNOTATED_CDS"/>
    <property type="molecule type" value="mRNA"/>
</dbReference>
<dbReference type="SMR" id="Q6KAI0"/>
<dbReference type="FunCoup" id="Q6KAI0">
    <property type="interactions" value="2220"/>
</dbReference>
<dbReference type="STRING" id="39947.Q6KAI0"/>
<dbReference type="PaxDb" id="39947-Q6KAI0"/>
<dbReference type="KEGG" id="dosa:Os02g0617700"/>
<dbReference type="eggNOG" id="KOG1067">
    <property type="taxonomic scope" value="Eukaryota"/>
</dbReference>
<dbReference type="HOGENOM" id="CLU_044277_0_0_1"/>
<dbReference type="InParanoid" id="Q6KAI0"/>
<dbReference type="Proteomes" id="UP000000763">
    <property type="component" value="Chromosome 2"/>
</dbReference>
<dbReference type="Proteomes" id="UP000059680">
    <property type="component" value="Chromosome 2"/>
</dbReference>
<dbReference type="GO" id="GO:0005829">
    <property type="term" value="C:cytosol"/>
    <property type="evidence" value="ECO:0000318"/>
    <property type="project" value="GO_Central"/>
</dbReference>
<dbReference type="GO" id="GO:0005739">
    <property type="term" value="C:mitochondrion"/>
    <property type="evidence" value="ECO:0000318"/>
    <property type="project" value="GO_Central"/>
</dbReference>
<dbReference type="GO" id="GO:0000175">
    <property type="term" value="F:3'-5'-RNA exonuclease activity"/>
    <property type="evidence" value="ECO:0000318"/>
    <property type="project" value="GO_Central"/>
</dbReference>
<dbReference type="GO" id="GO:0004654">
    <property type="term" value="F:polyribonucleotide nucleotidyltransferase activity"/>
    <property type="evidence" value="ECO:0000318"/>
    <property type="project" value="GO_Central"/>
</dbReference>
<dbReference type="GO" id="GO:0003723">
    <property type="term" value="F:RNA binding"/>
    <property type="evidence" value="ECO:0007669"/>
    <property type="project" value="UniProtKB-KW"/>
</dbReference>
<dbReference type="GO" id="GO:0000958">
    <property type="term" value="P:mitochondrial mRNA catabolic process"/>
    <property type="evidence" value="ECO:0000318"/>
    <property type="project" value="GO_Central"/>
</dbReference>
<dbReference type="GO" id="GO:0000965">
    <property type="term" value="P:mitochondrial RNA 3'-end processing"/>
    <property type="evidence" value="ECO:0000318"/>
    <property type="project" value="GO_Central"/>
</dbReference>
<dbReference type="GO" id="GO:0006397">
    <property type="term" value="P:mRNA processing"/>
    <property type="evidence" value="ECO:0007669"/>
    <property type="project" value="UniProtKB-KW"/>
</dbReference>
<dbReference type="GO" id="GO:0006364">
    <property type="term" value="P:rRNA processing"/>
    <property type="evidence" value="ECO:0007669"/>
    <property type="project" value="UniProtKB-KW"/>
</dbReference>
<dbReference type="GO" id="GO:0008033">
    <property type="term" value="P:tRNA processing"/>
    <property type="evidence" value="ECO:0007669"/>
    <property type="project" value="UniProtKB-KW"/>
</dbReference>
<dbReference type="CDD" id="cd11363">
    <property type="entry name" value="RNase_PH_PNPase_1"/>
    <property type="match status" value="1"/>
</dbReference>
<dbReference type="CDD" id="cd11364">
    <property type="entry name" value="RNase_PH_PNPase_2"/>
    <property type="match status" value="1"/>
</dbReference>
<dbReference type="FunFam" id="3.30.230.70:FF:000001">
    <property type="entry name" value="Polyribonucleotide nucleotidyltransferase"/>
    <property type="match status" value="1"/>
</dbReference>
<dbReference type="FunFam" id="3.30.230.70:FF:000020">
    <property type="entry name" value="Polyribonucleotide nucleotidyltransferase 2 mitochondrial"/>
    <property type="match status" value="1"/>
</dbReference>
<dbReference type="FunFam" id="2.40.50.140:FF:000189">
    <property type="entry name" value="Polyribonucleotide nucleotidyltransferase, putative"/>
    <property type="match status" value="1"/>
</dbReference>
<dbReference type="Gene3D" id="3.30.230.70">
    <property type="entry name" value="GHMP Kinase, N-terminal domain"/>
    <property type="match status" value="2"/>
</dbReference>
<dbReference type="Gene3D" id="2.40.50.140">
    <property type="entry name" value="Nucleic acid-binding proteins"/>
    <property type="match status" value="1"/>
</dbReference>
<dbReference type="HAMAP" id="MF_01595">
    <property type="entry name" value="PNPase"/>
    <property type="match status" value="1"/>
</dbReference>
<dbReference type="InterPro" id="IPR001247">
    <property type="entry name" value="ExoRNase_PH_dom1"/>
</dbReference>
<dbReference type="InterPro" id="IPR015847">
    <property type="entry name" value="ExoRNase_PH_dom2"/>
</dbReference>
<dbReference type="InterPro" id="IPR036345">
    <property type="entry name" value="ExoRNase_PH_dom2_sf"/>
</dbReference>
<dbReference type="InterPro" id="IPR012340">
    <property type="entry name" value="NA-bd_OB-fold"/>
</dbReference>
<dbReference type="InterPro" id="IPR012162">
    <property type="entry name" value="PNPase"/>
</dbReference>
<dbReference type="InterPro" id="IPR027408">
    <property type="entry name" value="PNPase/RNase_PH_dom_sf"/>
</dbReference>
<dbReference type="InterPro" id="IPR015848">
    <property type="entry name" value="PNPase_PH_RNA-bd_bac/org-type"/>
</dbReference>
<dbReference type="InterPro" id="IPR036456">
    <property type="entry name" value="PNPase_PH_RNA-bd_sf"/>
</dbReference>
<dbReference type="InterPro" id="IPR020568">
    <property type="entry name" value="Ribosomal_Su5_D2-typ_SF"/>
</dbReference>
<dbReference type="InterPro" id="IPR003029">
    <property type="entry name" value="S1_domain"/>
</dbReference>
<dbReference type="NCBIfam" id="TIGR03591">
    <property type="entry name" value="polynuc_phos"/>
    <property type="match status" value="1"/>
</dbReference>
<dbReference type="NCBIfam" id="NF008805">
    <property type="entry name" value="PRK11824.1"/>
    <property type="match status" value="1"/>
</dbReference>
<dbReference type="PANTHER" id="PTHR11252">
    <property type="entry name" value="POLYRIBONUCLEOTIDE NUCLEOTIDYLTRANSFERASE"/>
    <property type="match status" value="1"/>
</dbReference>
<dbReference type="PANTHER" id="PTHR11252:SF16">
    <property type="entry name" value="POLYRIBONUCLEOTIDE NUCLEOTIDYLTRANSFERASE 2, MITOCHONDRIAL"/>
    <property type="match status" value="1"/>
</dbReference>
<dbReference type="Pfam" id="PF03726">
    <property type="entry name" value="PNPase"/>
    <property type="match status" value="1"/>
</dbReference>
<dbReference type="Pfam" id="PF01138">
    <property type="entry name" value="RNase_PH"/>
    <property type="match status" value="2"/>
</dbReference>
<dbReference type="Pfam" id="PF03725">
    <property type="entry name" value="RNase_PH_C"/>
    <property type="match status" value="1"/>
</dbReference>
<dbReference type="Pfam" id="PF00575">
    <property type="entry name" value="S1"/>
    <property type="match status" value="1"/>
</dbReference>
<dbReference type="SMART" id="SM00316">
    <property type="entry name" value="S1"/>
    <property type="match status" value="2"/>
</dbReference>
<dbReference type="SUPFAM" id="SSF50249">
    <property type="entry name" value="Nucleic acid-binding proteins"/>
    <property type="match status" value="2"/>
</dbReference>
<dbReference type="SUPFAM" id="SSF46915">
    <property type="entry name" value="Polynucleotide phosphorylase/guanosine pentaphosphate synthase (PNPase/GPSI), domain 3"/>
    <property type="match status" value="1"/>
</dbReference>
<dbReference type="SUPFAM" id="SSF55666">
    <property type="entry name" value="Ribonuclease PH domain 2-like"/>
    <property type="match status" value="2"/>
</dbReference>
<dbReference type="SUPFAM" id="SSF54211">
    <property type="entry name" value="Ribosomal protein S5 domain 2-like"/>
    <property type="match status" value="2"/>
</dbReference>
<dbReference type="PROSITE" id="PS50126">
    <property type="entry name" value="S1"/>
    <property type="match status" value="1"/>
</dbReference>
<evidence type="ECO:0000250" key="1"/>
<evidence type="ECO:0000255" key="2"/>
<evidence type="ECO:0000256" key="3">
    <source>
        <dbReference type="SAM" id="MobiDB-lite"/>
    </source>
</evidence>
<evidence type="ECO:0000305" key="4"/>